<protein>
    <recommendedName>
        <fullName>Putative aconitate hydratase, cytoplasmic</fullName>
        <shortName>Aconitase</shortName>
        <ecNumber>4.2.1.3</ecNumber>
    </recommendedName>
    <alternativeName>
        <fullName>Citrate hydro-lyase</fullName>
    </alternativeName>
</protein>
<proteinExistence type="inferred from homology"/>
<sequence>MAAEHPFKNILTTLPKPGGGEYGKFYSLPALNDPRIDKLPYSIRILLESAIRNCDNFQVNQNDVEKIIDWENTSPKLAEIPFKPARVLLQDFTGVPAVVDLAAMRDAMAKLGSDANKINPLVPVDLVIDHSVQVDVARSPNAVQSNMELEFKRNNERFGFLKWGSTAFHNMLVVPPGSGIVHQVNLEYLGRVVFNTDGIMYPDSVVGTDSHTTMIDGLGVAGWGVGGIEAEATMLGQPMSMVLPGVVGFKLTGKLQNGVTATDLVLTVTQMLRKHGVVGKFVEFYGEGMGKLSLADRATIANMSPEYGATMGFFPVDHVTLDYLKLTGRSDETVAMIEAYLRANKMFVDYNEPQTERVYSSYLELDLNEVEPCISGPKRPHDRVLLKEMKSDWHSCLDNRVGFKGFAVPKEQQDKVVKFDFHGQPAELKHGSVVIAAITSCTNTSNPSVMLGAALVAKKACELGLEVKPWVKTSLAPGSGVVTKYLLQSGLQEYLNKQGFHVVGYGCTTCIGNSGDLDESVSAAISENDVVAAAVLSGNRNFEGRVHPLTRANYLASPPLVVAYALAGTVDIDFEKEPIGVGKDGKEVFFRDIWPSTEEIAEVVQSSVLPDMFKSTYEAITKGNPMWNQLTVPEASLYSWDPNSTYIHEPPYFKDMTMSPPGPHGVKNAYCLLNFGDSITTDHISPAGSIHKDSPAAKYLLERGVDRKDFNSYGSRRGNDEVMARGTFANIRIVNKFLNGEVGPKTVHVPTGEKLYVFDAALKYKSEGHDTIVLAGAEYGSGSSRDWAAKGPMLLGVKAVIAKSFERIHRSNLVGMGIIPLCFKAGEDADSLGLTGHERYTIDLPTNVSEIRPGQDITVTTDNGKSFTCTLRFDTEVELAYFNHGGILPYVIRNLAQN</sequence>
<name>ACOHC_ORYSJ</name>
<comment type="function">
    <text evidence="1">Catalyzes the isomerization of citrate to isocitrate via cis-aconitate.</text>
</comment>
<comment type="catalytic activity">
    <reaction>
        <text>citrate = D-threo-isocitrate</text>
        <dbReference type="Rhea" id="RHEA:10336"/>
        <dbReference type="ChEBI" id="CHEBI:15562"/>
        <dbReference type="ChEBI" id="CHEBI:16947"/>
        <dbReference type="EC" id="4.2.1.3"/>
    </reaction>
</comment>
<comment type="cofactor">
    <cofactor evidence="1">
        <name>[4Fe-4S] cluster</name>
        <dbReference type="ChEBI" id="CHEBI:49883"/>
    </cofactor>
    <text evidence="1">Binds 1 [4Fe-4S] cluster per subunit.</text>
</comment>
<comment type="pathway">
    <text>Carbohydrate metabolism; glyoxylate and dicarboxylate metabolism.</text>
</comment>
<comment type="subcellular location">
    <subcellularLocation>
        <location evidence="2">Cytoplasm</location>
    </subcellularLocation>
</comment>
<comment type="similarity">
    <text evidence="2">Belongs to the aconitase/IPM isomerase family.</text>
</comment>
<dbReference type="EC" id="4.2.1.3"/>
<dbReference type="EMBL" id="AP005505">
    <property type="protein sequence ID" value="BAD05751.1"/>
    <property type="molecule type" value="Genomic_DNA"/>
</dbReference>
<dbReference type="EMBL" id="AP014964">
    <property type="status" value="NOT_ANNOTATED_CDS"/>
    <property type="molecule type" value="Genomic_DNA"/>
</dbReference>
<dbReference type="SMR" id="Q6YZX6"/>
<dbReference type="FunCoup" id="Q6YZX6">
    <property type="interactions" value="2754"/>
</dbReference>
<dbReference type="STRING" id="39947.Q6YZX6"/>
<dbReference type="CarbonylDB" id="Q6YZX6"/>
<dbReference type="PaxDb" id="39947-Q6YZX6"/>
<dbReference type="InParanoid" id="Q6YZX6"/>
<dbReference type="PlantReactome" id="R-OSA-1119533">
    <property type="pathway name" value="TCA cycle (plant)"/>
</dbReference>
<dbReference type="PlantReactome" id="R-OSA-1119540">
    <property type="pathway name" value="Leucine biosynthesis"/>
</dbReference>
<dbReference type="UniPathway" id="UPA00227"/>
<dbReference type="Proteomes" id="UP000000763">
    <property type="component" value="Chromosome 8"/>
</dbReference>
<dbReference type="Proteomes" id="UP000059680">
    <property type="component" value="Chromosome 8"/>
</dbReference>
<dbReference type="GO" id="GO:0005739">
    <property type="term" value="C:mitochondrion"/>
    <property type="evidence" value="ECO:0000318"/>
    <property type="project" value="GO_Central"/>
</dbReference>
<dbReference type="GO" id="GO:0051539">
    <property type="term" value="F:4 iron, 4 sulfur cluster binding"/>
    <property type="evidence" value="ECO:0000318"/>
    <property type="project" value="GO_Central"/>
</dbReference>
<dbReference type="GO" id="GO:0003994">
    <property type="term" value="F:aconitate hydratase activity"/>
    <property type="evidence" value="ECO:0000318"/>
    <property type="project" value="GO_Central"/>
</dbReference>
<dbReference type="GO" id="GO:0030350">
    <property type="term" value="F:iron-responsive element binding"/>
    <property type="evidence" value="ECO:0000318"/>
    <property type="project" value="GO_Central"/>
</dbReference>
<dbReference type="GO" id="GO:0046872">
    <property type="term" value="F:metal ion binding"/>
    <property type="evidence" value="ECO:0007669"/>
    <property type="project" value="UniProtKB-KW"/>
</dbReference>
<dbReference type="GO" id="GO:0006101">
    <property type="term" value="P:citrate metabolic process"/>
    <property type="evidence" value="ECO:0000318"/>
    <property type="project" value="GO_Central"/>
</dbReference>
<dbReference type="GO" id="GO:0006097">
    <property type="term" value="P:glyoxylate cycle"/>
    <property type="evidence" value="ECO:0007669"/>
    <property type="project" value="UniProtKB-KW"/>
</dbReference>
<dbReference type="GO" id="GO:0006099">
    <property type="term" value="P:tricarboxylic acid cycle"/>
    <property type="evidence" value="ECO:0000318"/>
    <property type="project" value="GO_Central"/>
</dbReference>
<dbReference type="CDD" id="cd01586">
    <property type="entry name" value="AcnA_IRP"/>
    <property type="match status" value="1"/>
</dbReference>
<dbReference type="CDD" id="cd01580">
    <property type="entry name" value="AcnA_IRP_Swivel"/>
    <property type="match status" value="1"/>
</dbReference>
<dbReference type="FunFam" id="3.20.19.10:FF:000001">
    <property type="entry name" value="Aconitate hydratase"/>
    <property type="match status" value="1"/>
</dbReference>
<dbReference type="FunFam" id="3.30.499.10:FF:000002">
    <property type="entry name" value="Aconitate hydratase"/>
    <property type="match status" value="1"/>
</dbReference>
<dbReference type="FunFam" id="3.30.499.10:FF:000005">
    <property type="entry name" value="cytoplasmic aconitate hydratase"/>
    <property type="match status" value="1"/>
</dbReference>
<dbReference type="Gene3D" id="6.10.190.10">
    <property type="match status" value="1"/>
</dbReference>
<dbReference type="Gene3D" id="3.30.499.10">
    <property type="entry name" value="Aconitase, domain 3"/>
    <property type="match status" value="2"/>
</dbReference>
<dbReference type="Gene3D" id="3.20.19.10">
    <property type="entry name" value="Aconitase, domain 4"/>
    <property type="match status" value="1"/>
</dbReference>
<dbReference type="InterPro" id="IPR044137">
    <property type="entry name" value="AcnA_IRP_Swivel"/>
</dbReference>
<dbReference type="InterPro" id="IPR015931">
    <property type="entry name" value="Acnase/IPM_dHydase_lsu_aba_1/3"/>
</dbReference>
<dbReference type="InterPro" id="IPR001030">
    <property type="entry name" value="Acoase/IPM_deHydtase_lsu_aba"/>
</dbReference>
<dbReference type="InterPro" id="IPR015928">
    <property type="entry name" value="Aconitase/3IPM_dehydase_swvl"/>
</dbReference>
<dbReference type="InterPro" id="IPR006249">
    <property type="entry name" value="Aconitase/IRP2"/>
</dbReference>
<dbReference type="InterPro" id="IPR018136">
    <property type="entry name" value="Aconitase_4Fe-4S_BS"/>
</dbReference>
<dbReference type="InterPro" id="IPR036008">
    <property type="entry name" value="Aconitase_4Fe-4S_dom"/>
</dbReference>
<dbReference type="InterPro" id="IPR000573">
    <property type="entry name" value="AconitaseA/IPMdHydase_ssu_swvl"/>
</dbReference>
<dbReference type="NCBIfam" id="TIGR01341">
    <property type="entry name" value="aconitase_1"/>
    <property type="match status" value="1"/>
</dbReference>
<dbReference type="NCBIfam" id="NF006757">
    <property type="entry name" value="PRK09277.1"/>
    <property type="match status" value="1"/>
</dbReference>
<dbReference type="NCBIfam" id="NF009520">
    <property type="entry name" value="PRK12881.1"/>
    <property type="match status" value="1"/>
</dbReference>
<dbReference type="PANTHER" id="PTHR11670">
    <property type="entry name" value="ACONITASE/IRON-RESPONSIVE ELEMENT FAMILY MEMBER"/>
    <property type="match status" value="1"/>
</dbReference>
<dbReference type="Pfam" id="PF00330">
    <property type="entry name" value="Aconitase"/>
    <property type="match status" value="1"/>
</dbReference>
<dbReference type="Pfam" id="PF00694">
    <property type="entry name" value="Aconitase_C"/>
    <property type="match status" value="1"/>
</dbReference>
<dbReference type="PRINTS" id="PR00415">
    <property type="entry name" value="ACONITASE"/>
</dbReference>
<dbReference type="SUPFAM" id="SSF53732">
    <property type="entry name" value="Aconitase iron-sulfur domain"/>
    <property type="match status" value="1"/>
</dbReference>
<dbReference type="SUPFAM" id="SSF52016">
    <property type="entry name" value="LeuD/IlvD-like"/>
    <property type="match status" value="1"/>
</dbReference>
<dbReference type="PROSITE" id="PS00450">
    <property type="entry name" value="ACONITASE_1"/>
    <property type="match status" value="1"/>
</dbReference>
<dbReference type="PROSITE" id="PS01244">
    <property type="entry name" value="ACONITASE_2"/>
    <property type="match status" value="1"/>
</dbReference>
<keyword id="KW-0004">4Fe-4S</keyword>
<keyword id="KW-0963">Cytoplasm</keyword>
<keyword id="KW-0329">Glyoxylate bypass</keyword>
<keyword id="KW-0408">Iron</keyword>
<keyword id="KW-0411">Iron-sulfur</keyword>
<keyword id="KW-0456">Lyase</keyword>
<keyword id="KW-0479">Metal-binding</keyword>
<keyword id="KW-1185">Reference proteome</keyword>
<gene>
    <name type="ordered locus">Os08g0191100</name>
    <name type="ordered locus">LOC_Os08g09200</name>
    <name type="ORF">P0610E02.32</name>
</gene>
<evidence type="ECO:0000250" key="1"/>
<evidence type="ECO:0000305" key="2"/>
<organism>
    <name type="scientific">Oryza sativa subsp. japonica</name>
    <name type="common">Rice</name>
    <dbReference type="NCBI Taxonomy" id="39947"/>
    <lineage>
        <taxon>Eukaryota</taxon>
        <taxon>Viridiplantae</taxon>
        <taxon>Streptophyta</taxon>
        <taxon>Embryophyta</taxon>
        <taxon>Tracheophyta</taxon>
        <taxon>Spermatophyta</taxon>
        <taxon>Magnoliopsida</taxon>
        <taxon>Liliopsida</taxon>
        <taxon>Poales</taxon>
        <taxon>Poaceae</taxon>
        <taxon>BOP clade</taxon>
        <taxon>Oryzoideae</taxon>
        <taxon>Oryzeae</taxon>
        <taxon>Oryzinae</taxon>
        <taxon>Oryza</taxon>
        <taxon>Oryza sativa</taxon>
    </lineage>
</organism>
<feature type="chain" id="PRO_0000247306" description="Putative aconitate hydratase, cytoplasmic">
    <location>
        <begin position="1"/>
        <end position="898"/>
    </location>
</feature>
<feature type="binding site" evidence="1">
    <location>
        <position position="90"/>
    </location>
    <ligand>
        <name>substrate</name>
    </ligand>
</feature>
<feature type="binding site" evidence="1">
    <location>
        <begin position="209"/>
        <end position="211"/>
    </location>
    <ligand>
        <name>substrate</name>
    </ligand>
</feature>
<feature type="binding site" evidence="1">
    <location>
        <position position="441"/>
    </location>
    <ligand>
        <name>[4Fe-4S] cluster</name>
        <dbReference type="ChEBI" id="CHEBI:49883"/>
    </ligand>
</feature>
<feature type="binding site" evidence="1">
    <location>
        <position position="507"/>
    </location>
    <ligand>
        <name>[4Fe-4S] cluster</name>
        <dbReference type="ChEBI" id="CHEBI:49883"/>
    </ligand>
</feature>
<feature type="binding site" evidence="1">
    <location>
        <position position="510"/>
    </location>
    <ligand>
        <name>[4Fe-4S] cluster</name>
        <dbReference type="ChEBI" id="CHEBI:49883"/>
    </ligand>
</feature>
<feature type="binding site" evidence="1">
    <location>
        <position position="540"/>
    </location>
    <ligand>
        <name>substrate</name>
    </ligand>
</feature>
<feature type="binding site" evidence="1">
    <location>
        <position position="545"/>
    </location>
    <ligand>
        <name>substrate</name>
    </ligand>
</feature>
<feature type="binding site" evidence="1">
    <location>
        <position position="703"/>
    </location>
    <ligand>
        <name>substrate</name>
    </ligand>
</feature>
<feature type="binding site" evidence="1">
    <location>
        <begin position="784"/>
        <end position="785"/>
    </location>
    <ligand>
        <name>substrate</name>
    </ligand>
</feature>
<reference key="1">
    <citation type="journal article" date="2005" name="Nature">
        <title>The map-based sequence of the rice genome.</title>
        <authorList>
            <consortium name="International rice genome sequencing project (IRGSP)"/>
        </authorList>
    </citation>
    <scope>NUCLEOTIDE SEQUENCE [LARGE SCALE GENOMIC DNA]</scope>
    <source>
        <strain>cv. Nipponbare</strain>
    </source>
</reference>
<reference key="2">
    <citation type="journal article" date="2013" name="Rice">
        <title>Improvement of the Oryza sativa Nipponbare reference genome using next generation sequence and optical map data.</title>
        <authorList>
            <person name="Kawahara Y."/>
            <person name="de la Bastide M."/>
            <person name="Hamilton J.P."/>
            <person name="Kanamori H."/>
            <person name="McCombie W.R."/>
            <person name="Ouyang S."/>
            <person name="Schwartz D.C."/>
            <person name="Tanaka T."/>
            <person name="Wu J."/>
            <person name="Zhou S."/>
            <person name="Childs K.L."/>
            <person name="Davidson R.M."/>
            <person name="Lin H."/>
            <person name="Quesada-Ocampo L."/>
            <person name="Vaillancourt B."/>
            <person name="Sakai H."/>
            <person name="Lee S.S."/>
            <person name="Kim J."/>
            <person name="Numa H."/>
            <person name="Itoh T."/>
            <person name="Buell C.R."/>
            <person name="Matsumoto T."/>
        </authorList>
    </citation>
    <scope>GENOME REANNOTATION</scope>
    <source>
        <strain>cv. Nipponbare</strain>
    </source>
</reference>
<accession>Q6YZX6</accession>